<comment type="function">
    <text evidence="1">F(1)F(0) ATP synthase produces ATP from ADP in the presence of a proton or sodium gradient. F-type ATPases consist of two structural domains, F(1) containing the extramembraneous catalytic core and F(0) containing the membrane proton channel, linked together by a central stalk and a peripheral stalk. During catalysis, ATP synthesis in the catalytic domain of F(1) is coupled via a rotary mechanism of the central stalk subunits to proton translocation.</text>
</comment>
<comment type="function">
    <text evidence="1">Component of the F(0) channel, it forms part of the peripheral stalk, linking F(1) to F(0).</text>
</comment>
<comment type="subunit">
    <text evidence="1">F-type ATPases have 2 components, F(1) - the catalytic core - and F(0) - the membrane proton channel. F(1) has five subunits: alpha(3), beta(3), gamma(1), delta(1), epsilon(1). F(0) has three main subunits: a(1), b(2) and c(10-14). The alpha and beta chains form an alternating ring which encloses part of the gamma chain. F(1) is attached to F(0) by a central stalk formed by the gamma and epsilon chains, while a peripheral stalk is formed by the delta and b chains.</text>
</comment>
<comment type="subcellular location">
    <subcellularLocation>
        <location evidence="1">Cell membrane</location>
        <topology evidence="1">Single-pass membrane protein</topology>
    </subcellularLocation>
</comment>
<comment type="similarity">
    <text evidence="1">Belongs to the ATPase B chain family.</text>
</comment>
<gene>
    <name evidence="1" type="primary">atpF</name>
    <name type="ordered locus">LAF_0437</name>
</gene>
<accession>B2GAU1</accession>
<name>ATPF_LIMF3</name>
<evidence type="ECO:0000255" key="1">
    <source>
        <dbReference type="HAMAP-Rule" id="MF_01398"/>
    </source>
</evidence>
<evidence type="ECO:0000256" key="2">
    <source>
        <dbReference type="SAM" id="MobiDB-lite"/>
    </source>
</evidence>
<protein>
    <recommendedName>
        <fullName evidence="1">ATP synthase subunit b</fullName>
    </recommendedName>
    <alternativeName>
        <fullName evidence="1">ATP synthase F(0) sector subunit b</fullName>
    </alternativeName>
    <alternativeName>
        <fullName evidence="1">ATPase subunit I</fullName>
    </alternativeName>
    <alternativeName>
        <fullName evidence="1">F-type ATPase subunit b</fullName>
        <shortName evidence="1">F-ATPase subunit b</shortName>
    </alternativeName>
</protein>
<sequence>MFIIAESNQLYLGDMLFYLVSFLIMAALVWHFAWKPVTQMMQKRADKIANDIDSAAQSREEAQKLAAKRQEELKGSRQEAARIVDNAKQAGESQRAEIIATAQQDAQNLKNQAQKDAEQARQDALRGAKKDIANLSIEIASKLIHKQLNADDQQALIDTYIEGLVKHE</sequence>
<dbReference type="EMBL" id="AP008937">
    <property type="protein sequence ID" value="BAG26773.1"/>
    <property type="molecule type" value="Genomic_DNA"/>
</dbReference>
<dbReference type="RefSeq" id="WP_012390920.1">
    <property type="nucleotide sequence ID" value="NC_010610.1"/>
</dbReference>
<dbReference type="SMR" id="B2GAU1"/>
<dbReference type="GeneID" id="83715235"/>
<dbReference type="KEGG" id="lfe:LAF_0437"/>
<dbReference type="eggNOG" id="COG0711">
    <property type="taxonomic scope" value="Bacteria"/>
</dbReference>
<dbReference type="HOGENOM" id="CLU_079215_4_2_9"/>
<dbReference type="Proteomes" id="UP000001697">
    <property type="component" value="Chromosome"/>
</dbReference>
<dbReference type="GO" id="GO:0005886">
    <property type="term" value="C:plasma membrane"/>
    <property type="evidence" value="ECO:0007669"/>
    <property type="project" value="UniProtKB-SubCell"/>
</dbReference>
<dbReference type="GO" id="GO:0045259">
    <property type="term" value="C:proton-transporting ATP synthase complex"/>
    <property type="evidence" value="ECO:0007669"/>
    <property type="project" value="UniProtKB-KW"/>
</dbReference>
<dbReference type="GO" id="GO:0046933">
    <property type="term" value="F:proton-transporting ATP synthase activity, rotational mechanism"/>
    <property type="evidence" value="ECO:0007669"/>
    <property type="project" value="UniProtKB-UniRule"/>
</dbReference>
<dbReference type="GO" id="GO:0046961">
    <property type="term" value="F:proton-transporting ATPase activity, rotational mechanism"/>
    <property type="evidence" value="ECO:0007669"/>
    <property type="project" value="TreeGrafter"/>
</dbReference>
<dbReference type="CDD" id="cd06503">
    <property type="entry name" value="ATP-synt_Fo_b"/>
    <property type="match status" value="1"/>
</dbReference>
<dbReference type="Gene3D" id="6.10.250.1580">
    <property type="match status" value="1"/>
</dbReference>
<dbReference type="HAMAP" id="MF_01398">
    <property type="entry name" value="ATP_synth_b_bprime"/>
    <property type="match status" value="1"/>
</dbReference>
<dbReference type="InterPro" id="IPR028987">
    <property type="entry name" value="ATP_synth_B-like_membr_sf"/>
</dbReference>
<dbReference type="InterPro" id="IPR002146">
    <property type="entry name" value="ATP_synth_b/b'su_bac/chlpt"/>
</dbReference>
<dbReference type="InterPro" id="IPR005864">
    <property type="entry name" value="ATP_synth_F0_bsu_bac"/>
</dbReference>
<dbReference type="InterPro" id="IPR050059">
    <property type="entry name" value="ATP_synthase_B_chain"/>
</dbReference>
<dbReference type="NCBIfam" id="TIGR01144">
    <property type="entry name" value="ATP_synt_b"/>
    <property type="match status" value="1"/>
</dbReference>
<dbReference type="PANTHER" id="PTHR33445:SF1">
    <property type="entry name" value="ATP SYNTHASE SUBUNIT B"/>
    <property type="match status" value="1"/>
</dbReference>
<dbReference type="PANTHER" id="PTHR33445">
    <property type="entry name" value="ATP SYNTHASE SUBUNIT B', CHLOROPLASTIC"/>
    <property type="match status" value="1"/>
</dbReference>
<dbReference type="Pfam" id="PF00430">
    <property type="entry name" value="ATP-synt_B"/>
    <property type="match status" value="1"/>
</dbReference>
<dbReference type="SUPFAM" id="SSF81573">
    <property type="entry name" value="F1F0 ATP synthase subunit B, membrane domain"/>
    <property type="match status" value="1"/>
</dbReference>
<feature type="chain" id="PRO_0000368543" description="ATP synthase subunit b">
    <location>
        <begin position="1"/>
        <end position="168"/>
    </location>
</feature>
<feature type="transmembrane region" description="Helical" evidence="1">
    <location>
        <begin position="10"/>
        <end position="30"/>
    </location>
</feature>
<feature type="region of interest" description="Disordered" evidence="2">
    <location>
        <begin position="61"/>
        <end position="80"/>
    </location>
</feature>
<proteinExistence type="inferred from homology"/>
<organism>
    <name type="scientific">Limosilactobacillus fermentum (strain NBRC 3956 / LMG 18251)</name>
    <name type="common">Lactobacillus fermentum</name>
    <dbReference type="NCBI Taxonomy" id="334390"/>
    <lineage>
        <taxon>Bacteria</taxon>
        <taxon>Bacillati</taxon>
        <taxon>Bacillota</taxon>
        <taxon>Bacilli</taxon>
        <taxon>Lactobacillales</taxon>
        <taxon>Lactobacillaceae</taxon>
        <taxon>Limosilactobacillus</taxon>
    </lineage>
</organism>
<keyword id="KW-0066">ATP synthesis</keyword>
<keyword id="KW-1003">Cell membrane</keyword>
<keyword id="KW-0138">CF(0)</keyword>
<keyword id="KW-0375">Hydrogen ion transport</keyword>
<keyword id="KW-0406">Ion transport</keyword>
<keyword id="KW-0472">Membrane</keyword>
<keyword id="KW-1185">Reference proteome</keyword>
<keyword id="KW-0812">Transmembrane</keyword>
<keyword id="KW-1133">Transmembrane helix</keyword>
<keyword id="KW-0813">Transport</keyword>
<reference key="1">
    <citation type="journal article" date="2008" name="DNA Res.">
        <title>Comparative genome analysis of Lactobacillus reuteri and Lactobacillus fermentum reveal a genomic island for reuterin and cobalamin production.</title>
        <authorList>
            <person name="Morita H."/>
            <person name="Toh H."/>
            <person name="Fukuda S."/>
            <person name="Horikawa H."/>
            <person name="Oshima K."/>
            <person name="Suzuki T."/>
            <person name="Murakami M."/>
            <person name="Hisamatsu S."/>
            <person name="Kato Y."/>
            <person name="Takizawa T."/>
            <person name="Fukuoka H."/>
            <person name="Yoshimura T."/>
            <person name="Itoh K."/>
            <person name="O'Sullivan D.J."/>
            <person name="McKay L.L."/>
            <person name="Ohno H."/>
            <person name="Kikuchi J."/>
            <person name="Masaoka T."/>
            <person name="Hattori M."/>
        </authorList>
    </citation>
    <scope>NUCLEOTIDE SEQUENCE [LARGE SCALE GENOMIC DNA]</scope>
    <source>
        <strain>NBRC 3956 / LMG 18251</strain>
    </source>
</reference>